<protein>
    <recommendedName>
        <fullName evidence="1">S-adenosylmethionine synthase</fullName>
        <shortName evidence="1">AdoMet synthase</shortName>
        <ecNumber evidence="1">2.5.1.6</ecNumber>
    </recommendedName>
    <alternativeName>
        <fullName evidence="1">MAT</fullName>
    </alternativeName>
    <alternativeName>
        <fullName evidence="1">Methionine adenosyltransferase</fullName>
    </alternativeName>
</protein>
<organism>
    <name type="scientific">Acidiphilium cryptum (strain JF-5)</name>
    <dbReference type="NCBI Taxonomy" id="349163"/>
    <lineage>
        <taxon>Bacteria</taxon>
        <taxon>Pseudomonadati</taxon>
        <taxon>Pseudomonadota</taxon>
        <taxon>Alphaproteobacteria</taxon>
        <taxon>Acetobacterales</taxon>
        <taxon>Acidocellaceae</taxon>
        <taxon>Acidiphilium</taxon>
    </lineage>
</organism>
<name>METK_ACICJ</name>
<comment type="function">
    <text evidence="1">Catalyzes the formation of S-adenosylmethionine (AdoMet) from methionine and ATP. The overall synthetic reaction is composed of two sequential steps, AdoMet formation and the subsequent tripolyphosphate hydrolysis which occurs prior to release of AdoMet from the enzyme.</text>
</comment>
<comment type="catalytic activity">
    <reaction evidence="1">
        <text>L-methionine + ATP + H2O = S-adenosyl-L-methionine + phosphate + diphosphate</text>
        <dbReference type="Rhea" id="RHEA:21080"/>
        <dbReference type="ChEBI" id="CHEBI:15377"/>
        <dbReference type="ChEBI" id="CHEBI:30616"/>
        <dbReference type="ChEBI" id="CHEBI:33019"/>
        <dbReference type="ChEBI" id="CHEBI:43474"/>
        <dbReference type="ChEBI" id="CHEBI:57844"/>
        <dbReference type="ChEBI" id="CHEBI:59789"/>
        <dbReference type="EC" id="2.5.1.6"/>
    </reaction>
</comment>
<comment type="cofactor">
    <cofactor evidence="1">
        <name>Mg(2+)</name>
        <dbReference type="ChEBI" id="CHEBI:18420"/>
    </cofactor>
    <text evidence="1">Binds 2 divalent ions per subunit.</text>
</comment>
<comment type="cofactor">
    <cofactor evidence="1">
        <name>K(+)</name>
        <dbReference type="ChEBI" id="CHEBI:29103"/>
    </cofactor>
    <text evidence="1">Binds 1 potassium ion per subunit.</text>
</comment>
<comment type="pathway">
    <text evidence="1">Amino-acid biosynthesis; S-adenosyl-L-methionine biosynthesis; S-adenosyl-L-methionine from L-methionine: step 1/1.</text>
</comment>
<comment type="subunit">
    <text evidence="1">Homotetramer; dimer of dimers.</text>
</comment>
<comment type="subcellular location">
    <subcellularLocation>
        <location evidence="1">Cytoplasm</location>
    </subcellularLocation>
</comment>
<comment type="similarity">
    <text evidence="1">Belongs to the AdoMet synthase family.</text>
</comment>
<feature type="chain" id="PRO_1000007921" description="S-adenosylmethionine synthase">
    <location>
        <begin position="1"/>
        <end position="395"/>
    </location>
</feature>
<feature type="region of interest" description="Flexible loop" evidence="1">
    <location>
        <begin position="103"/>
        <end position="113"/>
    </location>
</feature>
<feature type="binding site" description="in other chain" evidence="1">
    <location>
        <position position="18"/>
    </location>
    <ligand>
        <name>ATP</name>
        <dbReference type="ChEBI" id="CHEBI:30616"/>
        <note>ligand shared between two neighboring subunits</note>
    </ligand>
</feature>
<feature type="binding site" evidence="1">
    <location>
        <position position="20"/>
    </location>
    <ligand>
        <name>Mg(2+)</name>
        <dbReference type="ChEBI" id="CHEBI:18420"/>
    </ligand>
</feature>
<feature type="binding site" evidence="1">
    <location>
        <position position="46"/>
    </location>
    <ligand>
        <name>K(+)</name>
        <dbReference type="ChEBI" id="CHEBI:29103"/>
    </ligand>
</feature>
<feature type="binding site" description="in other chain" evidence="1">
    <location>
        <position position="59"/>
    </location>
    <ligand>
        <name>L-methionine</name>
        <dbReference type="ChEBI" id="CHEBI:57844"/>
        <note>ligand shared between two neighboring subunits</note>
    </ligand>
</feature>
<feature type="binding site" description="in other chain" evidence="1">
    <location>
        <position position="103"/>
    </location>
    <ligand>
        <name>L-methionine</name>
        <dbReference type="ChEBI" id="CHEBI:57844"/>
        <note>ligand shared between two neighboring subunits</note>
    </ligand>
</feature>
<feature type="binding site" description="in other chain" evidence="1">
    <location>
        <begin position="170"/>
        <end position="172"/>
    </location>
    <ligand>
        <name>ATP</name>
        <dbReference type="ChEBI" id="CHEBI:30616"/>
        <note>ligand shared between two neighboring subunits</note>
    </ligand>
</feature>
<feature type="binding site" description="in other chain" evidence="1">
    <location>
        <begin position="235"/>
        <end position="236"/>
    </location>
    <ligand>
        <name>ATP</name>
        <dbReference type="ChEBI" id="CHEBI:30616"/>
        <note>ligand shared between two neighboring subunits</note>
    </ligand>
</feature>
<feature type="binding site" evidence="1">
    <location>
        <position position="244"/>
    </location>
    <ligand>
        <name>ATP</name>
        <dbReference type="ChEBI" id="CHEBI:30616"/>
        <note>ligand shared between two neighboring subunits</note>
    </ligand>
</feature>
<feature type="binding site" evidence="1">
    <location>
        <position position="244"/>
    </location>
    <ligand>
        <name>L-methionine</name>
        <dbReference type="ChEBI" id="CHEBI:57844"/>
        <note>ligand shared between two neighboring subunits</note>
    </ligand>
</feature>
<feature type="binding site" description="in other chain" evidence="1">
    <location>
        <begin position="250"/>
        <end position="251"/>
    </location>
    <ligand>
        <name>ATP</name>
        <dbReference type="ChEBI" id="CHEBI:30616"/>
        <note>ligand shared between two neighboring subunits</note>
    </ligand>
</feature>
<feature type="binding site" evidence="1">
    <location>
        <position position="267"/>
    </location>
    <ligand>
        <name>ATP</name>
        <dbReference type="ChEBI" id="CHEBI:30616"/>
        <note>ligand shared between two neighboring subunits</note>
    </ligand>
</feature>
<feature type="binding site" evidence="1">
    <location>
        <position position="271"/>
    </location>
    <ligand>
        <name>ATP</name>
        <dbReference type="ChEBI" id="CHEBI:30616"/>
        <note>ligand shared between two neighboring subunits</note>
    </ligand>
</feature>
<feature type="binding site" description="in other chain" evidence="1">
    <location>
        <position position="275"/>
    </location>
    <ligand>
        <name>L-methionine</name>
        <dbReference type="ChEBI" id="CHEBI:57844"/>
        <note>ligand shared between two neighboring subunits</note>
    </ligand>
</feature>
<gene>
    <name evidence="1" type="primary">metK</name>
    <name type="ordered locus">Acry_1054</name>
</gene>
<accession>A5FXD8</accession>
<sequence>MRDKGDYLFTSESVSEGHPDKVADRISDTVLDAFLAADPYARVACETLVTTNRIVLAGETRGPSTITREYLAHLARLAVHDIGYEQEGFSWRDAKIDVLLHEQSVDIAVGVDAAGNKDEGAGDQGIMFGYACSETDALMPAPIYYAHLILRRMTELRKIGDARAAGLLPDAKSQVTLRYADGKPVGTTSIVVSTQHEDGMSQDEIKAMLRPLVTELLPDGWMCPDDQFYVNPTGKFVIGGPDGDCGLTGRKIIVDTYGGAAPHGGGAFSGKDPTKVDRSAAYMCRYLAKNVVAAGLATRCTIQVSYAIGVSHPLSVYVDMHGTERDVDHARLETVLRELVNLTPRGIREHLHLNRPIYVPTSAYGHFGREPDDRLGTFTWEKTDLAPALKAAFGR</sequence>
<keyword id="KW-0067">ATP-binding</keyword>
<keyword id="KW-0963">Cytoplasm</keyword>
<keyword id="KW-0460">Magnesium</keyword>
<keyword id="KW-0479">Metal-binding</keyword>
<keyword id="KW-0547">Nucleotide-binding</keyword>
<keyword id="KW-0554">One-carbon metabolism</keyword>
<keyword id="KW-0630">Potassium</keyword>
<keyword id="KW-1185">Reference proteome</keyword>
<keyword id="KW-0808">Transferase</keyword>
<proteinExistence type="inferred from homology"/>
<dbReference type="EC" id="2.5.1.6" evidence="1"/>
<dbReference type="EMBL" id="CP000697">
    <property type="protein sequence ID" value="ABQ30270.1"/>
    <property type="molecule type" value="Genomic_DNA"/>
</dbReference>
<dbReference type="RefSeq" id="WP_011941956.1">
    <property type="nucleotide sequence ID" value="NC_009484.1"/>
</dbReference>
<dbReference type="SMR" id="A5FXD8"/>
<dbReference type="STRING" id="349163.Acry_1054"/>
<dbReference type="KEGG" id="acr:Acry_1054"/>
<dbReference type="eggNOG" id="COG0192">
    <property type="taxonomic scope" value="Bacteria"/>
</dbReference>
<dbReference type="HOGENOM" id="CLU_041802_1_1_5"/>
<dbReference type="UniPathway" id="UPA00315">
    <property type="reaction ID" value="UER00080"/>
</dbReference>
<dbReference type="Proteomes" id="UP000000245">
    <property type="component" value="Chromosome"/>
</dbReference>
<dbReference type="GO" id="GO:0005737">
    <property type="term" value="C:cytoplasm"/>
    <property type="evidence" value="ECO:0007669"/>
    <property type="project" value="UniProtKB-SubCell"/>
</dbReference>
<dbReference type="GO" id="GO:0005524">
    <property type="term" value="F:ATP binding"/>
    <property type="evidence" value="ECO:0007669"/>
    <property type="project" value="UniProtKB-UniRule"/>
</dbReference>
<dbReference type="GO" id="GO:0000287">
    <property type="term" value="F:magnesium ion binding"/>
    <property type="evidence" value="ECO:0007669"/>
    <property type="project" value="UniProtKB-UniRule"/>
</dbReference>
<dbReference type="GO" id="GO:0004478">
    <property type="term" value="F:methionine adenosyltransferase activity"/>
    <property type="evidence" value="ECO:0007669"/>
    <property type="project" value="UniProtKB-UniRule"/>
</dbReference>
<dbReference type="GO" id="GO:0006730">
    <property type="term" value="P:one-carbon metabolic process"/>
    <property type="evidence" value="ECO:0007669"/>
    <property type="project" value="UniProtKB-KW"/>
</dbReference>
<dbReference type="GO" id="GO:0006556">
    <property type="term" value="P:S-adenosylmethionine biosynthetic process"/>
    <property type="evidence" value="ECO:0007669"/>
    <property type="project" value="UniProtKB-UniRule"/>
</dbReference>
<dbReference type="CDD" id="cd18079">
    <property type="entry name" value="S-AdoMet_synt"/>
    <property type="match status" value="1"/>
</dbReference>
<dbReference type="Gene3D" id="3.30.300.10">
    <property type="match status" value="3"/>
</dbReference>
<dbReference type="HAMAP" id="MF_00086">
    <property type="entry name" value="S_AdoMet_synth1"/>
    <property type="match status" value="1"/>
</dbReference>
<dbReference type="InterPro" id="IPR022631">
    <property type="entry name" value="ADOMET_SYNTHASE_CS"/>
</dbReference>
<dbReference type="InterPro" id="IPR022630">
    <property type="entry name" value="S-AdoMet_synt_C"/>
</dbReference>
<dbReference type="InterPro" id="IPR022629">
    <property type="entry name" value="S-AdoMet_synt_central"/>
</dbReference>
<dbReference type="InterPro" id="IPR022628">
    <property type="entry name" value="S-AdoMet_synt_N"/>
</dbReference>
<dbReference type="InterPro" id="IPR002133">
    <property type="entry name" value="S-AdoMet_synthetase"/>
</dbReference>
<dbReference type="InterPro" id="IPR022636">
    <property type="entry name" value="S-AdoMet_synthetase_sfam"/>
</dbReference>
<dbReference type="NCBIfam" id="TIGR01034">
    <property type="entry name" value="metK"/>
    <property type="match status" value="1"/>
</dbReference>
<dbReference type="PANTHER" id="PTHR11964">
    <property type="entry name" value="S-ADENOSYLMETHIONINE SYNTHETASE"/>
    <property type="match status" value="1"/>
</dbReference>
<dbReference type="Pfam" id="PF02773">
    <property type="entry name" value="S-AdoMet_synt_C"/>
    <property type="match status" value="1"/>
</dbReference>
<dbReference type="Pfam" id="PF02772">
    <property type="entry name" value="S-AdoMet_synt_M"/>
    <property type="match status" value="1"/>
</dbReference>
<dbReference type="Pfam" id="PF00438">
    <property type="entry name" value="S-AdoMet_synt_N"/>
    <property type="match status" value="1"/>
</dbReference>
<dbReference type="PIRSF" id="PIRSF000497">
    <property type="entry name" value="MAT"/>
    <property type="match status" value="1"/>
</dbReference>
<dbReference type="SUPFAM" id="SSF55973">
    <property type="entry name" value="S-adenosylmethionine synthetase"/>
    <property type="match status" value="3"/>
</dbReference>
<dbReference type="PROSITE" id="PS00376">
    <property type="entry name" value="ADOMET_SYNTHASE_1"/>
    <property type="match status" value="1"/>
</dbReference>
<dbReference type="PROSITE" id="PS00377">
    <property type="entry name" value="ADOMET_SYNTHASE_2"/>
    <property type="match status" value="1"/>
</dbReference>
<reference key="1">
    <citation type="submission" date="2007-05" db="EMBL/GenBank/DDBJ databases">
        <title>Complete sequence of chromosome of Acidiphilium cryptum JF-5.</title>
        <authorList>
            <consortium name="US DOE Joint Genome Institute"/>
            <person name="Copeland A."/>
            <person name="Lucas S."/>
            <person name="Lapidus A."/>
            <person name="Barry K."/>
            <person name="Detter J.C."/>
            <person name="Glavina del Rio T."/>
            <person name="Hammon N."/>
            <person name="Israni S."/>
            <person name="Dalin E."/>
            <person name="Tice H."/>
            <person name="Pitluck S."/>
            <person name="Sims D."/>
            <person name="Brettin T."/>
            <person name="Bruce D."/>
            <person name="Han C."/>
            <person name="Schmutz J."/>
            <person name="Larimer F."/>
            <person name="Land M."/>
            <person name="Hauser L."/>
            <person name="Kyrpides N."/>
            <person name="Kim E."/>
            <person name="Magnuson T."/>
            <person name="Richardson P."/>
        </authorList>
    </citation>
    <scope>NUCLEOTIDE SEQUENCE [LARGE SCALE GENOMIC DNA]</scope>
    <source>
        <strain>JF-5</strain>
    </source>
</reference>
<evidence type="ECO:0000255" key="1">
    <source>
        <dbReference type="HAMAP-Rule" id="MF_00086"/>
    </source>
</evidence>